<evidence type="ECO:0000250" key="1">
    <source>
        <dbReference type="UniProtKB" id="Q9Y8A5"/>
    </source>
</evidence>
<evidence type="ECO:0000255" key="2"/>
<evidence type="ECO:0000255" key="3">
    <source>
        <dbReference type="PROSITE-ProRule" id="PRU00258"/>
    </source>
</evidence>
<evidence type="ECO:0000255" key="4">
    <source>
        <dbReference type="PROSITE-ProRule" id="PRU01348"/>
    </source>
</evidence>
<evidence type="ECO:0000255" key="5">
    <source>
        <dbReference type="PROSITE-ProRule" id="PRU01363"/>
    </source>
</evidence>
<evidence type="ECO:0000255" key="6">
    <source>
        <dbReference type="PROSITE-ProRule" id="PRU10022"/>
    </source>
</evidence>
<evidence type="ECO:0000269" key="7">
    <source>
    </source>
</evidence>
<evidence type="ECO:0000269" key="8">
    <source>
    </source>
</evidence>
<evidence type="ECO:0000269" key="9">
    <source>
    </source>
</evidence>
<evidence type="ECO:0000269" key="10">
    <source>
    </source>
</evidence>
<evidence type="ECO:0000303" key="11">
    <source>
    </source>
</evidence>
<evidence type="ECO:0000305" key="12">
    <source>
    </source>
</evidence>
<evidence type="ECO:0000305" key="13">
    <source>
    </source>
</evidence>
<organism>
    <name type="scientific">Gibberella zeae (strain ATCC MYA-4620 / CBS 123657 / FGSC 9075 / NRRL 31084 / PH-1)</name>
    <name type="common">Wheat head blight fungus</name>
    <name type="synonym">Fusarium graminearum</name>
    <dbReference type="NCBI Taxonomy" id="229533"/>
    <lineage>
        <taxon>Eukaryota</taxon>
        <taxon>Fungi</taxon>
        <taxon>Dikarya</taxon>
        <taxon>Ascomycota</taxon>
        <taxon>Pezizomycotina</taxon>
        <taxon>Sordariomycetes</taxon>
        <taxon>Hypocreomycetidae</taxon>
        <taxon>Hypocreales</taxon>
        <taxon>Nectriaceae</taxon>
        <taxon>Fusarium</taxon>
    </lineage>
</organism>
<sequence length="2642" mass="286924">MQGPTNEPIAIIGTGCRFPGGSNTASKLWDLLKDPKDVSKEVPEDRFNLDRFYHKDSSHHGTANVRRSYLLDEDVRLFDTQFFGISPGEAQAMDPQHRVLLEVVYEAIESAGKTIHGLHNSDTAVYVGLMCTDYYVIQAADLNSVPTYNATGVANSNASSRVSYFFNWHGPSMTIDTACSSSLVAVHEAVQALRNGTSRMAVACGTNLILSPLPFISESNLSMLSPTGKSRMWDADADGYARGEGVAAVVLKPLSAAIEDNDVIECIIREVGVNQDGKTRGITMPSAQAQASLIRQTYAKAGLDPATPEGRCQFFEAHGTGTPAGDPQEAEALKTAFFPNETDSVTNGTNGLLSEADNLLVGSIKTVIGHTEGTAGLAGLIKACMALKHGAVPPNLLFNRLNPALEPFTKHLSIPTSLTPWPTLLTNVPRRASVNSFGFGGTNAHAILEAYSQAPQNSFATPSSSPLVVPAIPFVFSAASETSLRGVLESFLEYLNTSKDKDESLDLTSLAYILSTKRTVLSQRVSIIASTFEQLLEKVEAVLDDSASSVVGSKAATLSHPALLGVFTGQGAQWATMGTKLMRSNPLAQSVIQDLDAVLASLPECHRPRWSLGRELLADTTSRIKEAELSQPLCTAVQIMLVDLLKANGVQFQGVVGHSSGEIAAAYAAGFVSSADAIKIAYYRGYFAKLASGSSSTGKDSSVKGSMMAVGTTYEDAIELCQLEDFRGRISLAAHNGPNSVTLSGDSDAINQAHFIFSEEEKKFARLLKVDTAYHSSHMQPCVSPYTEALQACGIVAREPASDAPKWFSSVRSGKPVLDVDGLDCQYWVDNLLSPVMFHEAVQGCLDSSDTYNAILEIGPHAALKGPLDESVLELMGNKLPYTSALVRGKDDIESFSTALGFLWTQFGNQCVDLGTFQKRVSKDTGSKLCSTMDDLPTYAWTHDKPLWAESRSTKLFRTMPGSFHDLLGIQTADGTAEEWRWQNILKTKELPWMVGHALQGQIVFPGTGYIALAMEASLQIAQGRPVSKIDLYDLEIRKAIAVNESASGTELLVTMTNVSAIHPDVETITADFATYSTISRESGSMALNCCGKVCIFLQTETVTTTGSDGHAAEQFATRSTPVPGMAGIDVERFYSAMQHDLGYMYSGPFRGLSRLSRKLGFSEGSIQRPPFGEDGSETTLIFHPGMLDNALQGLFAAYSAPGDGRLWSMRAPTACRRVSLVPSLCGPNMTEEVDFDCTLTDSRDDFITGDVEVYASGYSQRIIEIEGLSFSPFAAATDRDDRQLFQEQIWCVNEADGPLVLGNMAPTFEERTKALDAERAAFFYLKKLHLSVPSDQRSQLPWYRQSLLDNAERLYDLVCSGTHSYAPQSWIQDTKEDVYAMMESYGPQDADFNLTKAVGENLPLPDVIKGDTNILQYMTQNNYLDRYYTHAIGFGWLNVLISGVVGQIADKHPKMRFLEIGAGTGGATGAVLDRIGQAYSSYTYTDISSGFFERAVDKFQDHAGKMLFKMLDIEKDPVSQGFPEHSYDIILAANVLHATKNLTETLQNTRRLLKPGGFLVLMEILGNDVMRIGLVMGGLPGWWVGKDDGRRWGPTITLEEWDTLLKGTGFAGVDTNTPMPDKVQMPGSVFVAQAVDDRIVKLRDPLQHDALPSAATDHVNGIQNGHTPSPTISKGTSHLVVIGGSSTSGSKLASDIIRVLSPLFAEIIHIPQLDSKDAIAKIPSNVDLHILSLTECDTGGTFFHNISNTAWQNFQHLLATSPASLLWVVPNTRSGNPLGAIGTGLFRSLFYEIPETKFQVLDLDEKATGYLSGCAGLIAKLVQQLRLVTDTSSARGPSTLTPETSEDDLQSVNDGTATVEMLWTVEPELYLHDGRLYISRVRLQKAQNDRYNSWRRPILQLTESKSTVDPSLSTSSLGRQTSLELQWKDDAYYNLKEINWFAKPLSTDSATIDVSCSLASCLKTPAGFFFVQVGTDVNTGEKKLCLSTENRSRVTVHSSWTETLKQEHDVADGQYMSFIVADMIVQQIMYMLPPTGILLLHEPDPGLASLLTRQLANIGRKVVFTTTRSDKSTNLLSKANWIFMHPRLNKRLIESALPHGVTFFIDCGQAEDVIHEGSHGKDHGLGLRLHNSLSRTCVKRTLQDLTSRTASVAPHEATGEVVKLLHRITTFAAAQLNSVPDGAPLKVKSLSEIVSRAKTRALATAEGCSTGPFCLVNWHAESQVPISVAPVWDRDDLFRSDRTYWMLGLTGDLGRSLAEFMISRGARHVVLSSRTPQPDEMWVERQQKKYGATVVYIAVDLTSLDSVQKAHKQIVKSMPPLAGVANGALVLKDSSVAKMTIEQLQAVLRPKVDGTLHLQSVVDANSGSEEQPLDWFIAFSSIVGTTGNLGQAAYSAANGFLKAWVSQQRSMFGHNAAVIDISRVLGVGYVERETQSNSGRLTREQTDRLMNRTGTLAMSETDLHQLFAEAVVAADHCSASNTGLSVGARDAEIITGIAPISSAQAEDVFWARNPRFGLLVIDSNAAVGGDDQDGKGSERRQVPVKTQLAAANTPQEVTSVLTSCIVTKLRASLFLSASDSFSETVALVDQGVDSLVGVDIRTWCIKELDVDVPVLKILGGASVVDLADYILESLPVKEKSK</sequence>
<protein>
    <recommendedName>
        <fullName evidence="11">Fusarielin synthase FSL1</fullName>
        <ecNumber evidence="13">2.3.1.-</ecNumber>
    </recommendedName>
    <alternativeName>
        <fullName evidence="11">Fusarielin biosynthesis cluster protein 1</fullName>
    </alternativeName>
    <alternativeName>
        <fullName evidence="11">Reducing polyketide synthase FSL1</fullName>
    </alternativeName>
</protein>
<proteinExistence type="evidence at transcript level"/>
<comment type="function">
    <text evidence="8 10">Reducing polyketide synthase; part of the gene cluster that mediates the biosynthesis of fusarielins F, G and H, decaketide compounds with 5 methylations and a decaline core that act as mycoestrogens as they stimulate growth of MCF-7 breast cancer cells (PubMed:22252016, PubMed:27983606). The initial compound in the pathway is produced by the reducing polyketide synthase FSL1. FSL1 lacks an active enoyl reductase (ER) domain and biosynthesis of fusarielins relies on the trans-acting enoyl reductase FSL5, before it is released through hydrolysis catalyzed by the thioesterase FSL2 (PubMed:22252016, PubMed:27983606). Fusarielins F, G, and H have a C11=C12 cis double bond and is fully reduced between C10 and C11 and between C12 and C13. FSL3 can be involved in the formation of the C11=C12 cis double bond by moving a hypothetical C10=C11 or C12=C13 trans double bond to form prefusarielin (PubMed:27983606). Prefusarielin is oxygenated at C15 and C16 by the cytochrome P450 monooxygenase FSL4, resulting in fusarielin F, which subsequently is epoxidized into fusarielin G by the same enzyme (PubMed:27983606). The final step in the pathway is a reduction of the carboxylic acid moiety to yield fusarielin H via a still undetermined mechanism (PubMed:27983606).</text>
</comment>
<comment type="cofactor">
    <cofactor evidence="1">
        <name>pantetheine 4'-phosphate</name>
        <dbReference type="ChEBI" id="CHEBI:47942"/>
    </cofactor>
    <text evidence="1">Binds 1 phosphopantetheine covalently.</text>
</comment>
<comment type="pathway">
    <text evidence="8 10">Secondary metabolite biosynthesis.</text>
</comment>
<comment type="induction">
    <text evidence="7 8 9">Expressed during sexual development (PubMed:16278459). Is not expressed during infection of wheat plants (PubMed:23290226). Expression is positively regulated by the fusarielin biosynthesis cluster-specific transcription factor FSL7, probably via its binding at the 5'-CGGNNNCCG-3' motif present in the promoter of all the cluster genes (PubMed:22252016).</text>
</comment>
<comment type="domain">
    <text evidence="12">Multidomain protein; including a ketosynthase (KS) that catalyzes repeated decarboxylative condensation to elongate the polyketide backbone; a malonyl-CoA:ACP transacylase (MAT) that selects and transfers the extender unit malonyl-CoA; a dehydratase (DH) domain that reduces hydroxyl groups to enoyl groups; a methyltransferase (MET) domain that transfers methyl groups to the growing polyketide; a ketoreductase (KR) domain that catalyzes beta-ketoreduction steps; and an acyl-carrier protein (ACP) that serves as the tether of the growing and completed polyketide via its phosphopantetheinyl arm (Probable). Lacks an active enoyl reductase (ER) domain that reduces enoyl groups to alkyl groups, and biosynthesis of fusarielins relies on the trans-acting enoyl reductase FSL5 (Probable).</text>
</comment>
<comment type="disruption phenotype">
    <text evidence="7 8 10">Leads to significant increase in growth (PubMed:16278459). Abolishes the production of fusarielins F, G and H (PubMed:22252016, PubMed:27983606).</text>
</comment>
<keyword id="KW-0012">Acyltransferase</keyword>
<keyword id="KW-0489">Methyltransferase</keyword>
<keyword id="KW-0511">Multifunctional enzyme</keyword>
<keyword id="KW-0521">NADP</keyword>
<keyword id="KW-0560">Oxidoreductase</keyword>
<keyword id="KW-0596">Phosphopantetheine</keyword>
<keyword id="KW-0597">Phosphoprotein</keyword>
<keyword id="KW-1185">Reference proteome</keyword>
<keyword id="KW-0808">Transferase</keyword>
<reference key="1">
    <citation type="journal article" date="2007" name="Science">
        <title>The Fusarium graminearum genome reveals a link between localized polymorphism and pathogen specialization.</title>
        <authorList>
            <person name="Cuomo C.A."/>
            <person name="Gueldener U."/>
            <person name="Xu J.-R."/>
            <person name="Trail F."/>
            <person name="Turgeon B.G."/>
            <person name="Di Pietro A."/>
            <person name="Walton J.D."/>
            <person name="Ma L.-J."/>
            <person name="Baker S.E."/>
            <person name="Rep M."/>
            <person name="Adam G."/>
            <person name="Antoniw J."/>
            <person name="Baldwin T."/>
            <person name="Calvo S.E."/>
            <person name="Chang Y.-L."/>
            <person name="DeCaprio D."/>
            <person name="Gale L.R."/>
            <person name="Gnerre S."/>
            <person name="Goswami R.S."/>
            <person name="Hammond-Kosack K."/>
            <person name="Harris L.J."/>
            <person name="Hilburn K."/>
            <person name="Kennell J.C."/>
            <person name="Kroken S."/>
            <person name="Magnuson J.K."/>
            <person name="Mannhaupt G."/>
            <person name="Mauceli E.W."/>
            <person name="Mewes H.-W."/>
            <person name="Mitterbauer R."/>
            <person name="Muehlbauer G."/>
            <person name="Muensterkoetter M."/>
            <person name="Nelson D."/>
            <person name="O'Donnell K."/>
            <person name="Ouellet T."/>
            <person name="Qi W."/>
            <person name="Quesneville H."/>
            <person name="Roncero M.I.G."/>
            <person name="Seong K.-Y."/>
            <person name="Tetko I.V."/>
            <person name="Urban M."/>
            <person name="Waalwijk C."/>
            <person name="Ward T.J."/>
            <person name="Yao J."/>
            <person name="Birren B.W."/>
            <person name="Kistler H.C."/>
        </authorList>
    </citation>
    <scope>NUCLEOTIDE SEQUENCE [LARGE SCALE GENOMIC DNA]</scope>
    <source>
        <strain>ATCC MYA-4620 / CBS 123657 / FGSC 9075 / NRRL 31084 / PH-1</strain>
    </source>
</reference>
<reference key="2">
    <citation type="journal article" date="2010" name="Nature">
        <title>Comparative genomics reveals mobile pathogenicity chromosomes in Fusarium.</title>
        <authorList>
            <person name="Ma L.-J."/>
            <person name="van der Does H.C."/>
            <person name="Borkovich K.A."/>
            <person name="Coleman J.J."/>
            <person name="Daboussi M.-J."/>
            <person name="Di Pietro A."/>
            <person name="Dufresne M."/>
            <person name="Freitag M."/>
            <person name="Grabherr M."/>
            <person name="Henrissat B."/>
            <person name="Houterman P.M."/>
            <person name="Kang S."/>
            <person name="Shim W.-B."/>
            <person name="Woloshuk C."/>
            <person name="Xie X."/>
            <person name="Xu J.-R."/>
            <person name="Antoniw J."/>
            <person name="Baker S.E."/>
            <person name="Bluhm B.H."/>
            <person name="Breakspear A."/>
            <person name="Brown D.W."/>
            <person name="Butchko R.A.E."/>
            <person name="Chapman S."/>
            <person name="Coulson R."/>
            <person name="Coutinho P.M."/>
            <person name="Danchin E.G.J."/>
            <person name="Diener A."/>
            <person name="Gale L.R."/>
            <person name="Gardiner D.M."/>
            <person name="Goff S."/>
            <person name="Hammond-Kosack K.E."/>
            <person name="Hilburn K."/>
            <person name="Hua-Van A."/>
            <person name="Jonkers W."/>
            <person name="Kazan K."/>
            <person name="Kodira C.D."/>
            <person name="Koehrsen M."/>
            <person name="Kumar L."/>
            <person name="Lee Y.-H."/>
            <person name="Li L."/>
            <person name="Manners J.M."/>
            <person name="Miranda-Saavedra D."/>
            <person name="Mukherjee M."/>
            <person name="Park G."/>
            <person name="Park J."/>
            <person name="Park S.-Y."/>
            <person name="Proctor R.H."/>
            <person name="Regev A."/>
            <person name="Ruiz-Roldan M.C."/>
            <person name="Sain D."/>
            <person name="Sakthikumar S."/>
            <person name="Sykes S."/>
            <person name="Schwartz D.C."/>
            <person name="Turgeon B.G."/>
            <person name="Wapinski I."/>
            <person name="Yoder O."/>
            <person name="Young S."/>
            <person name="Zeng Q."/>
            <person name="Zhou S."/>
            <person name="Galagan J."/>
            <person name="Cuomo C.A."/>
            <person name="Kistler H.C."/>
            <person name="Rep M."/>
        </authorList>
    </citation>
    <scope>GENOME REANNOTATION</scope>
    <source>
        <strain>ATCC MYA-4620 / CBS 123657 / FGSC 9075 / NRRL 31084 / PH-1</strain>
    </source>
</reference>
<reference key="3">
    <citation type="journal article" date="2015" name="BMC Genomics">
        <title>The completed genome sequence of the pathogenic ascomycete fungus Fusarium graminearum.</title>
        <authorList>
            <person name="King R."/>
            <person name="Urban M."/>
            <person name="Hammond-Kosack M.C.U."/>
            <person name="Hassani-Pak K."/>
            <person name="Hammond-Kosack K.E."/>
        </authorList>
    </citation>
    <scope>NUCLEOTIDE SEQUENCE [LARGE SCALE GENOMIC DNA]</scope>
    <source>
        <strain>ATCC MYA-4620 / CBS 123657 / FGSC 9075 / NRRL 31084 / PH-1</strain>
    </source>
</reference>
<reference key="4">
    <citation type="journal article" date="2005" name="Eukaryot. Cell">
        <title>Functional analysis of the polyketide synthase genes in the filamentous fungus Gibberella zeae (anamorph Fusarium graminearum).</title>
        <authorList>
            <person name="Gaffoor I."/>
            <person name="Brown D.W."/>
            <person name="Plattner R."/>
            <person name="Proctor R.H."/>
            <person name="Qi W."/>
            <person name="Trail F."/>
        </authorList>
    </citation>
    <scope>IDENTIFICATION</scope>
    <scope>DISRUPTION PHENOTYPE</scope>
    <scope>INDUCTION</scope>
</reference>
<reference key="5">
    <citation type="journal article" date="2012" name="Environ. Microbiol.">
        <title>Production of novel fusarielins by ectopic activation of the polyketide synthase 9 cluster in Fusarium graminearum.</title>
        <authorList>
            <person name="Soerensen J.L."/>
            <person name="Hansen F.T."/>
            <person name="Sondergaard T.E."/>
            <person name="Staerk D."/>
            <person name="Lee T.V."/>
            <person name="Wimmer R."/>
            <person name="Klitgaard L.G."/>
            <person name="Purup S."/>
            <person name="Giese H."/>
            <person name="Frandsen R.J."/>
        </authorList>
    </citation>
    <scope>INDUCTION</scope>
    <scope>FUNCTION</scope>
    <scope>DOMAIN</scope>
    <scope>DISRUPTION PHENOTYPE</scope>
    <scope>PATHWAY</scope>
</reference>
<reference key="6">
    <citation type="journal article" date="2013" name="Int. J. Food Microbiol.">
        <title>Production of fusarielins by Fusarium.</title>
        <authorList>
            <person name="Soerensen J.L."/>
            <person name="Akk E."/>
            <person name="Thrane U."/>
            <person name="Giese H."/>
            <person name="Sondergaard T.E."/>
        </authorList>
    </citation>
    <scope>INDUCTION</scope>
</reference>
<reference key="7">
    <citation type="journal article" date="2016" name="Molecules">
        <title>Functional Analysis of the Fusarielin Biosynthetic Gene Cluster.</title>
        <authorList>
            <person name="Droce A."/>
            <person name="Saei W."/>
            <person name="Joergensen S.H."/>
            <person name="Wimmer R."/>
            <person name="Giese H."/>
            <person name="Wollenberg R.D."/>
            <person name="Sondergaard T.E."/>
            <person name="Soerensen J.L."/>
        </authorList>
    </citation>
    <scope>FUNCTION</scope>
    <scope>DISRUPTION PHENOTYPE</scope>
    <scope>PATHWAY</scope>
</reference>
<name>FSL1_GIBZE</name>
<gene>
    <name evidence="11" type="primary">FSL1</name>
    <name evidence="11" type="synonym">PKS9</name>
    <name type="ORF">FG10464</name>
    <name type="ORF">FGRAMPH1_01T08165</name>
</gene>
<feature type="chain" id="PRO_0000444959" description="Fusarielin synthase FSL1">
    <location>
        <begin position="1"/>
        <end position="2642"/>
    </location>
</feature>
<feature type="domain" description="Ketosynthase family 3 (KS3)" evidence="4 12">
    <location>
        <begin position="6"/>
        <end position="450"/>
    </location>
</feature>
<feature type="domain" description="PKS/mFAS DH" evidence="5">
    <location>
        <begin position="965"/>
        <end position="1280"/>
    </location>
</feature>
<feature type="domain" description="Carrier" evidence="3 12">
    <location>
        <begin position="2556"/>
        <end position="2635"/>
    </location>
</feature>
<feature type="region of interest" description="Malonyl-CoA:ACP transacylase (MAT) domain" evidence="2 12">
    <location>
        <begin position="566"/>
        <end position="890"/>
    </location>
</feature>
<feature type="region of interest" description="Dehydratase (DH) domain" evidence="2 12">
    <location>
        <begin position="965"/>
        <end position="1279"/>
    </location>
</feature>
<feature type="region of interest" description="N-terminal hotdog fold" evidence="5">
    <location>
        <begin position="965"/>
        <end position="1101"/>
    </location>
</feature>
<feature type="region of interest" description="C-terminal hotdog fold" evidence="5">
    <location>
        <begin position="1126"/>
        <end position="1280"/>
    </location>
</feature>
<feature type="region of interest" description="Methyltransferase (MET) domain" evidence="2 12">
    <location>
        <begin position="1423"/>
        <end position="1622"/>
    </location>
</feature>
<feature type="region of interest" description="Ketoreductase (KR) domain" evidence="2 12">
    <location>
        <begin position="2244"/>
        <end position="2423"/>
    </location>
</feature>
<feature type="active site" description="For beta-ketoacyl synthase activity" evidence="4">
    <location>
        <position position="179"/>
    </location>
</feature>
<feature type="active site" description="For beta-ketoacyl synthase activity" evidence="4">
    <location>
        <position position="318"/>
    </location>
</feature>
<feature type="active site" description="For beta-ketoacyl synthase activity" evidence="4">
    <location>
        <position position="370"/>
    </location>
</feature>
<feature type="active site" description="For malonyltransferase activity" evidence="6">
    <location>
        <position position="659"/>
    </location>
</feature>
<feature type="active site" description="Proton acceptor; for dehydratase activity" evidence="5">
    <location>
        <position position="997"/>
    </location>
</feature>
<feature type="active site" description="Proton donor; for dehydratase activity" evidence="5">
    <location>
        <position position="1189"/>
    </location>
</feature>
<feature type="modified residue" description="O-(pantetheine 4'-phosphoryl)serine" evidence="3">
    <location>
        <position position="2595"/>
    </location>
</feature>
<accession>I1S166</accession>
<accession>A0A098DD60</accession>
<dbReference type="EC" id="2.3.1.-" evidence="13"/>
<dbReference type="EMBL" id="HG970332">
    <property type="protein sequence ID" value="CEF75886.1"/>
    <property type="molecule type" value="Genomic_DNA"/>
</dbReference>
<dbReference type="RefSeq" id="XP_011319443.1">
    <property type="nucleotide sequence ID" value="XM_011321141.1"/>
</dbReference>
<dbReference type="SMR" id="I1S166"/>
<dbReference type="STRING" id="229533.I1S166"/>
<dbReference type="KEGG" id="fgr:FGSG_10464"/>
<dbReference type="VEuPathDB" id="FungiDB:FGRAMPH1_01G08165"/>
<dbReference type="eggNOG" id="KOG1202">
    <property type="taxonomic scope" value="Eukaryota"/>
</dbReference>
<dbReference type="HOGENOM" id="CLU_000022_37_5_1"/>
<dbReference type="InParanoid" id="I1S166"/>
<dbReference type="OrthoDB" id="94903at110618"/>
<dbReference type="Proteomes" id="UP000070720">
    <property type="component" value="Chromosome 1"/>
</dbReference>
<dbReference type="GO" id="GO:0004315">
    <property type="term" value="F:3-oxoacyl-[acyl-carrier-protein] synthase activity"/>
    <property type="evidence" value="ECO:0007669"/>
    <property type="project" value="InterPro"/>
</dbReference>
<dbReference type="GO" id="GO:0004312">
    <property type="term" value="F:fatty acid synthase activity"/>
    <property type="evidence" value="ECO:0007669"/>
    <property type="project" value="TreeGrafter"/>
</dbReference>
<dbReference type="GO" id="GO:0008168">
    <property type="term" value="F:methyltransferase activity"/>
    <property type="evidence" value="ECO:0007669"/>
    <property type="project" value="UniProtKB-KW"/>
</dbReference>
<dbReference type="GO" id="GO:0016491">
    <property type="term" value="F:oxidoreductase activity"/>
    <property type="evidence" value="ECO:0007669"/>
    <property type="project" value="UniProtKB-KW"/>
</dbReference>
<dbReference type="GO" id="GO:0031177">
    <property type="term" value="F:phosphopantetheine binding"/>
    <property type="evidence" value="ECO:0007669"/>
    <property type="project" value="InterPro"/>
</dbReference>
<dbReference type="GO" id="GO:0006633">
    <property type="term" value="P:fatty acid biosynthetic process"/>
    <property type="evidence" value="ECO:0007669"/>
    <property type="project" value="InterPro"/>
</dbReference>
<dbReference type="GO" id="GO:0032259">
    <property type="term" value="P:methylation"/>
    <property type="evidence" value="ECO:0007669"/>
    <property type="project" value="UniProtKB-KW"/>
</dbReference>
<dbReference type="GO" id="GO:0044550">
    <property type="term" value="P:secondary metabolite biosynthetic process"/>
    <property type="evidence" value="ECO:0007669"/>
    <property type="project" value="TreeGrafter"/>
</dbReference>
<dbReference type="CDD" id="cd02440">
    <property type="entry name" value="AdoMet_MTases"/>
    <property type="match status" value="1"/>
</dbReference>
<dbReference type="CDD" id="cd00833">
    <property type="entry name" value="PKS"/>
    <property type="match status" value="1"/>
</dbReference>
<dbReference type="FunFam" id="3.40.47.10:FF:000019">
    <property type="entry name" value="Polyketide synthase type I"/>
    <property type="match status" value="1"/>
</dbReference>
<dbReference type="Gene3D" id="3.40.47.10">
    <property type="match status" value="1"/>
</dbReference>
<dbReference type="Gene3D" id="1.10.1200.10">
    <property type="entry name" value="ACP-like"/>
    <property type="match status" value="1"/>
</dbReference>
<dbReference type="Gene3D" id="3.40.366.10">
    <property type="entry name" value="Malonyl-Coenzyme A Acyl Carrier Protein, domain 2"/>
    <property type="match status" value="1"/>
</dbReference>
<dbReference type="Gene3D" id="3.40.50.720">
    <property type="entry name" value="NAD(P)-binding Rossmann-like Domain"/>
    <property type="match status" value="1"/>
</dbReference>
<dbReference type="Gene3D" id="3.10.129.110">
    <property type="entry name" value="Polyketide synthase dehydratase"/>
    <property type="match status" value="1"/>
</dbReference>
<dbReference type="Gene3D" id="3.40.50.150">
    <property type="entry name" value="Vaccinia Virus protein VP39"/>
    <property type="match status" value="1"/>
</dbReference>
<dbReference type="InterPro" id="IPR001227">
    <property type="entry name" value="Ac_transferase_dom_sf"/>
</dbReference>
<dbReference type="InterPro" id="IPR036736">
    <property type="entry name" value="ACP-like_sf"/>
</dbReference>
<dbReference type="InterPro" id="IPR014043">
    <property type="entry name" value="Acyl_transferase_dom"/>
</dbReference>
<dbReference type="InterPro" id="IPR016035">
    <property type="entry name" value="Acyl_Trfase/lysoPLipase"/>
</dbReference>
<dbReference type="InterPro" id="IPR018201">
    <property type="entry name" value="Ketoacyl_synth_AS"/>
</dbReference>
<dbReference type="InterPro" id="IPR014031">
    <property type="entry name" value="Ketoacyl_synth_C"/>
</dbReference>
<dbReference type="InterPro" id="IPR014030">
    <property type="entry name" value="Ketoacyl_synth_N"/>
</dbReference>
<dbReference type="InterPro" id="IPR016036">
    <property type="entry name" value="Malonyl_transacylase_ACP-bd"/>
</dbReference>
<dbReference type="InterPro" id="IPR013217">
    <property type="entry name" value="Methyltransf_12"/>
</dbReference>
<dbReference type="InterPro" id="IPR036291">
    <property type="entry name" value="NAD(P)-bd_dom_sf"/>
</dbReference>
<dbReference type="InterPro" id="IPR032821">
    <property type="entry name" value="PKS_assoc"/>
</dbReference>
<dbReference type="InterPro" id="IPR020841">
    <property type="entry name" value="PKS_Beta-ketoAc_synthase_dom"/>
</dbReference>
<dbReference type="InterPro" id="IPR042104">
    <property type="entry name" value="PKS_dehydratase_sf"/>
</dbReference>
<dbReference type="InterPro" id="IPR020807">
    <property type="entry name" value="PKS_DH"/>
</dbReference>
<dbReference type="InterPro" id="IPR049551">
    <property type="entry name" value="PKS_DH_C"/>
</dbReference>
<dbReference type="InterPro" id="IPR049552">
    <property type="entry name" value="PKS_DH_N"/>
</dbReference>
<dbReference type="InterPro" id="IPR013968">
    <property type="entry name" value="PKS_KR"/>
</dbReference>
<dbReference type="InterPro" id="IPR049900">
    <property type="entry name" value="PKS_mFAS_DH"/>
</dbReference>
<dbReference type="InterPro" id="IPR050091">
    <property type="entry name" value="PKS_NRPS_Biosynth_Enz"/>
</dbReference>
<dbReference type="InterPro" id="IPR020806">
    <property type="entry name" value="PKS_PP-bd"/>
</dbReference>
<dbReference type="InterPro" id="IPR009081">
    <property type="entry name" value="PP-bd_ACP"/>
</dbReference>
<dbReference type="InterPro" id="IPR029063">
    <property type="entry name" value="SAM-dependent_MTases_sf"/>
</dbReference>
<dbReference type="InterPro" id="IPR016039">
    <property type="entry name" value="Thiolase-like"/>
</dbReference>
<dbReference type="PANTHER" id="PTHR43775">
    <property type="entry name" value="FATTY ACID SYNTHASE"/>
    <property type="match status" value="1"/>
</dbReference>
<dbReference type="PANTHER" id="PTHR43775:SF20">
    <property type="entry name" value="HYBRID PKS-NRPS SYNTHETASE APDA"/>
    <property type="match status" value="1"/>
</dbReference>
<dbReference type="Pfam" id="PF00698">
    <property type="entry name" value="Acyl_transf_1"/>
    <property type="match status" value="1"/>
</dbReference>
<dbReference type="Pfam" id="PF16197">
    <property type="entry name" value="KAsynt_C_assoc"/>
    <property type="match status" value="1"/>
</dbReference>
<dbReference type="Pfam" id="PF00109">
    <property type="entry name" value="ketoacyl-synt"/>
    <property type="match status" value="1"/>
</dbReference>
<dbReference type="Pfam" id="PF02801">
    <property type="entry name" value="Ketoacyl-synt_C"/>
    <property type="match status" value="1"/>
</dbReference>
<dbReference type="Pfam" id="PF08659">
    <property type="entry name" value="KR"/>
    <property type="match status" value="1"/>
</dbReference>
<dbReference type="Pfam" id="PF08242">
    <property type="entry name" value="Methyltransf_12"/>
    <property type="match status" value="1"/>
</dbReference>
<dbReference type="Pfam" id="PF21089">
    <property type="entry name" value="PKS_DH_N"/>
    <property type="match status" value="1"/>
</dbReference>
<dbReference type="Pfam" id="PF14765">
    <property type="entry name" value="PS-DH"/>
    <property type="match status" value="1"/>
</dbReference>
<dbReference type="SMART" id="SM00827">
    <property type="entry name" value="PKS_AT"/>
    <property type="match status" value="1"/>
</dbReference>
<dbReference type="SMART" id="SM00826">
    <property type="entry name" value="PKS_DH"/>
    <property type="match status" value="1"/>
</dbReference>
<dbReference type="SMART" id="SM00822">
    <property type="entry name" value="PKS_KR"/>
    <property type="match status" value="1"/>
</dbReference>
<dbReference type="SMART" id="SM00825">
    <property type="entry name" value="PKS_KS"/>
    <property type="match status" value="1"/>
</dbReference>
<dbReference type="SMART" id="SM00823">
    <property type="entry name" value="PKS_PP"/>
    <property type="match status" value="1"/>
</dbReference>
<dbReference type="SUPFAM" id="SSF47336">
    <property type="entry name" value="ACP-like"/>
    <property type="match status" value="1"/>
</dbReference>
<dbReference type="SUPFAM" id="SSF52151">
    <property type="entry name" value="FabD/lysophospholipase-like"/>
    <property type="match status" value="1"/>
</dbReference>
<dbReference type="SUPFAM" id="SSF51735">
    <property type="entry name" value="NAD(P)-binding Rossmann-fold domains"/>
    <property type="match status" value="1"/>
</dbReference>
<dbReference type="SUPFAM" id="SSF55048">
    <property type="entry name" value="Probable ACP-binding domain of malonyl-CoA ACP transacylase"/>
    <property type="match status" value="1"/>
</dbReference>
<dbReference type="SUPFAM" id="SSF53335">
    <property type="entry name" value="S-adenosyl-L-methionine-dependent methyltransferases"/>
    <property type="match status" value="1"/>
</dbReference>
<dbReference type="SUPFAM" id="SSF53901">
    <property type="entry name" value="Thiolase-like"/>
    <property type="match status" value="1"/>
</dbReference>
<dbReference type="PROSITE" id="PS50075">
    <property type="entry name" value="CARRIER"/>
    <property type="match status" value="1"/>
</dbReference>
<dbReference type="PROSITE" id="PS00606">
    <property type="entry name" value="KS3_1"/>
    <property type="match status" value="1"/>
</dbReference>
<dbReference type="PROSITE" id="PS52004">
    <property type="entry name" value="KS3_2"/>
    <property type="match status" value="1"/>
</dbReference>
<dbReference type="PROSITE" id="PS52019">
    <property type="entry name" value="PKS_MFAS_DH"/>
    <property type="match status" value="1"/>
</dbReference>